<dbReference type="EC" id="4.2.1.126" evidence="1"/>
<dbReference type="EMBL" id="CP000020">
    <property type="protein sequence ID" value="AAW85609.1"/>
    <property type="molecule type" value="Genomic_DNA"/>
</dbReference>
<dbReference type="RefSeq" id="WP_011261744.1">
    <property type="nucleotide sequence ID" value="NC_006840.2"/>
</dbReference>
<dbReference type="RefSeq" id="YP_204497.1">
    <property type="nucleotide sequence ID" value="NC_006840.2"/>
</dbReference>
<dbReference type="SMR" id="Q5E5T7"/>
<dbReference type="STRING" id="312309.VF_1114"/>
<dbReference type="EnsemblBacteria" id="AAW85609">
    <property type="protein sequence ID" value="AAW85609"/>
    <property type="gene ID" value="VF_1114"/>
</dbReference>
<dbReference type="GeneID" id="54163786"/>
<dbReference type="KEGG" id="vfi:VF_1114"/>
<dbReference type="PATRIC" id="fig|312309.11.peg.1119"/>
<dbReference type="eggNOG" id="COG2103">
    <property type="taxonomic scope" value="Bacteria"/>
</dbReference>
<dbReference type="HOGENOM" id="CLU_049049_1_1_6"/>
<dbReference type="OrthoDB" id="9813395at2"/>
<dbReference type="UniPathway" id="UPA00342"/>
<dbReference type="UniPathway" id="UPA00343"/>
<dbReference type="UniPathway" id="UPA00544"/>
<dbReference type="Proteomes" id="UP000000537">
    <property type="component" value="Chromosome I"/>
</dbReference>
<dbReference type="GO" id="GO:0097367">
    <property type="term" value="F:carbohydrate derivative binding"/>
    <property type="evidence" value="ECO:0007669"/>
    <property type="project" value="InterPro"/>
</dbReference>
<dbReference type="GO" id="GO:0016835">
    <property type="term" value="F:carbon-oxygen lyase activity"/>
    <property type="evidence" value="ECO:0007669"/>
    <property type="project" value="UniProtKB-UniRule"/>
</dbReference>
<dbReference type="GO" id="GO:0016803">
    <property type="term" value="F:ether hydrolase activity"/>
    <property type="evidence" value="ECO:0007669"/>
    <property type="project" value="TreeGrafter"/>
</dbReference>
<dbReference type="GO" id="GO:0097175">
    <property type="term" value="P:1,6-anhydro-N-acetyl-beta-muramic acid catabolic process"/>
    <property type="evidence" value="ECO:0007669"/>
    <property type="project" value="UniProtKB-UniRule"/>
</dbReference>
<dbReference type="GO" id="GO:0046348">
    <property type="term" value="P:amino sugar catabolic process"/>
    <property type="evidence" value="ECO:0007669"/>
    <property type="project" value="InterPro"/>
</dbReference>
<dbReference type="GO" id="GO:0097173">
    <property type="term" value="P:N-acetylmuramic acid catabolic process"/>
    <property type="evidence" value="ECO:0007669"/>
    <property type="project" value="UniProtKB-UniPathway"/>
</dbReference>
<dbReference type="GO" id="GO:0009254">
    <property type="term" value="P:peptidoglycan turnover"/>
    <property type="evidence" value="ECO:0007669"/>
    <property type="project" value="UniProtKB-UniRule"/>
</dbReference>
<dbReference type="CDD" id="cd05007">
    <property type="entry name" value="SIS_Etherase"/>
    <property type="match status" value="1"/>
</dbReference>
<dbReference type="FunFam" id="1.10.8.1080:FF:000001">
    <property type="entry name" value="N-acetylmuramic acid 6-phosphate etherase"/>
    <property type="match status" value="1"/>
</dbReference>
<dbReference type="FunFam" id="3.40.50.10490:FF:000014">
    <property type="entry name" value="N-acetylmuramic acid 6-phosphate etherase"/>
    <property type="match status" value="1"/>
</dbReference>
<dbReference type="Gene3D" id="1.10.8.1080">
    <property type="match status" value="1"/>
</dbReference>
<dbReference type="Gene3D" id="3.40.50.10490">
    <property type="entry name" value="Glucose-6-phosphate isomerase like protein, domain 1"/>
    <property type="match status" value="1"/>
</dbReference>
<dbReference type="HAMAP" id="MF_00068">
    <property type="entry name" value="MurQ"/>
    <property type="match status" value="1"/>
</dbReference>
<dbReference type="InterPro" id="IPR005488">
    <property type="entry name" value="Etherase_MurQ"/>
</dbReference>
<dbReference type="InterPro" id="IPR005486">
    <property type="entry name" value="Glucokinase_regulatory_CS"/>
</dbReference>
<dbReference type="InterPro" id="IPR040190">
    <property type="entry name" value="MURQ/GCKR"/>
</dbReference>
<dbReference type="InterPro" id="IPR001347">
    <property type="entry name" value="SIS_dom"/>
</dbReference>
<dbReference type="InterPro" id="IPR046348">
    <property type="entry name" value="SIS_dom_sf"/>
</dbReference>
<dbReference type="NCBIfam" id="TIGR00274">
    <property type="entry name" value="N-acetylmuramic acid 6-phosphate etherase"/>
    <property type="match status" value="1"/>
</dbReference>
<dbReference type="NCBIfam" id="NF003915">
    <property type="entry name" value="PRK05441.1"/>
    <property type="match status" value="1"/>
</dbReference>
<dbReference type="NCBIfam" id="NF009222">
    <property type="entry name" value="PRK12570.1"/>
    <property type="match status" value="1"/>
</dbReference>
<dbReference type="PANTHER" id="PTHR10088">
    <property type="entry name" value="GLUCOKINASE REGULATORY PROTEIN"/>
    <property type="match status" value="1"/>
</dbReference>
<dbReference type="PANTHER" id="PTHR10088:SF4">
    <property type="entry name" value="GLUCOKINASE REGULATORY PROTEIN"/>
    <property type="match status" value="1"/>
</dbReference>
<dbReference type="Pfam" id="PF22645">
    <property type="entry name" value="GKRP_SIS_N"/>
    <property type="match status" value="1"/>
</dbReference>
<dbReference type="SUPFAM" id="SSF53697">
    <property type="entry name" value="SIS domain"/>
    <property type="match status" value="1"/>
</dbReference>
<dbReference type="PROSITE" id="PS01272">
    <property type="entry name" value="GCKR"/>
    <property type="match status" value="1"/>
</dbReference>
<dbReference type="PROSITE" id="PS51464">
    <property type="entry name" value="SIS"/>
    <property type="match status" value="1"/>
</dbReference>
<organism>
    <name type="scientific">Aliivibrio fischeri (strain ATCC 700601 / ES114)</name>
    <name type="common">Vibrio fischeri</name>
    <dbReference type="NCBI Taxonomy" id="312309"/>
    <lineage>
        <taxon>Bacteria</taxon>
        <taxon>Pseudomonadati</taxon>
        <taxon>Pseudomonadota</taxon>
        <taxon>Gammaproteobacteria</taxon>
        <taxon>Vibrionales</taxon>
        <taxon>Vibrionaceae</taxon>
        <taxon>Aliivibrio</taxon>
    </lineage>
</organism>
<name>MURQ_ALIF1</name>
<evidence type="ECO:0000255" key="1">
    <source>
        <dbReference type="HAMAP-Rule" id="MF_00068"/>
    </source>
</evidence>
<gene>
    <name evidence="1" type="primary">murQ</name>
    <name type="ordered locus">VF_1114</name>
</gene>
<reference key="1">
    <citation type="journal article" date="2005" name="Proc. Natl. Acad. Sci. U.S.A.">
        <title>Complete genome sequence of Vibrio fischeri: a symbiotic bacterium with pathogenic congeners.</title>
        <authorList>
            <person name="Ruby E.G."/>
            <person name="Urbanowski M."/>
            <person name="Campbell J."/>
            <person name="Dunn A."/>
            <person name="Faini M."/>
            <person name="Gunsalus R."/>
            <person name="Lostroh P."/>
            <person name="Lupp C."/>
            <person name="McCann J."/>
            <person name="Millikan D."/>
            <person name="Schaefer A."/>
            <person name="Stabb E."/>
            <person name="Stevens A."/>
            <person name="Visick K."/>
            <person name="Whistler C."/>
            <person name="Greenberg E.P."/>
        </authorList>
    </citation>
    <scope>NUCLEOTIDE SEQUENCE [LARGE SCALE GENOMIC DNA]</scope>
    <source>
        <strain>ATCC 700601 / ES114</strain>
    </source>
</reference>
<sequence>MKIDLTTLVTESRNKASENIDVLSTVEMLTVINQEDQKVALAVEAILPQIADVVDAIAVAFQSGGRLIYTGAGTSGRLGILDASECPPTYGSNPDLVVGLIAGGHKAILKAVENAEDNRELGASDLQDLGLNEKDVLVGIAASGRTPYVLGAMEYAKSVGATVATLSCNPNSPMTELADINMTPVVGPEVVTGSSRMKAGTAQKLVLNMLTTGAMIRTGKVFGNLMVDVEATNAKLVQRQKNIVIEATGCSEVEASEALSQCDNHCKTAILMVLSGLDAQSAKAKLAQHNGFIRNALSDQ</sequence>
<feature type="chain" id="PRO_0000249676" description="N-acetylmuramic acid 6-phosphate etherase">
    <location>
        <begin position="1"/>
        <end position="300"/>
    </location>
</feature>
<feature type="domain" description="SIS" evidence="1">
    <location>
        <begin position="57"/>
        <end position="220"/>
    </location>
</feature>
<feature type="active site" description="Proton donor" evidence="1">
    <location>
        <position position="85"/>
    </location>
</feature>
<feature type="active site" evidence="1">
    <location>
        <position position="116"/>
    </location>
</feature>
<comment type="function">
    <text evidence="1">Specifically catalyzes the cleavage of the D-lactyl ether substituent of MurNAc 6-phosphate, producing GlcNAc 6-phosphate and D-lactate. Together with AnmK, is also required for the utilization of anhydro-N-acetylmuramic acid (anhMurNAc) either imported from the medium or derived from its own cell wall murein, and thus plays a role in cell wall recycling.</text>
</comment>
<comment type="catalytic activity">
    <reaction evidence="1">
        <text>N-acetyl-D-muramate 6-phosphate + H2O = N-acetyl-D-glucosamine 6-phosphate + (R)-lactate</text>
        <dbReference type="Rhea" id="RHEA:26410"/>
        <dbReference type="ChEBI" id="CHEBI:15377"/>
        <dbReference type="ChEBI" id="CHEBI:16004"/>
        <dbReference type="ChEBI" id="CHEBI:57513"/>
        <dbReference type="ChEBI" id="CHEBI:58722"/>
        <dbReference type="EC" id="4.2.1.126"/>
    </reaction>
</comment>
<comment type="pathway">
    <text evidence="1">Amino-sugar metabolism; 1,6-anhydro-N-acetylmuramate degradation.</text>
</comment>
<comment type="pathway">
    <text evidence="1">Amino-sugar metabolism; N-acetylmuramate degradation.</text>
</comment>
<comment type="pathway">
    <text evidence="1">Cell wall biogenesis; peptidoglycan recycling.</text>
</comment>
<comment type="subunit">
    <text evidence="1">Homodimer.</text>
</comment>
<comment type="miscellaneous">
    <text evidence="1">A lyase-type mechanism (elimination/hydration) is suggested for the cleavage of the lactyl ether bond of MurNAc 6-phosphate, with the formation of an alpha,beta-unsaturated aldehyde intermediate with (E)-stereochemistry, followed by the syn addition of water to give product.</text>
</comment>
<comment type="similarity">
    <text evidence="1">Belongs to the GCKR-like family. MurNAc-6-P etherase subfamily.</text>
</comment>
<keyword id="KW-0119">Carbohydrate metabolism</keyword>
<keyword id="KW-0456">Lyase</keyword>
<keyword id="KW-1185">Reference proteome</keyword>
<protein>
    <recommendedName>
        <fullName evidence="1">N-acetylmuramic acid 6-phosphate etherase</fullName>
        <shortName evidence="1">MurNAc-6-P etherase</shortName>
        <ecNumber evidence="1">4.2.1.126</ecNumber>
    </recommendedName>
    <alternativeName>
        <fullName evidence="1">N-acetylmuramic acid 6-phosphate hydrolase</fullName>
    </alternativeName>
    <alternativeName>
        <fullName evidence="1">N-acetylmuramic acid 6-phosphate lyase</fullName>
    </alternativeName>
</protein>
<accession>Q5E5T7</accession>
<proteinExistence type="inferred from homology"/>